<feature type="chain" id="PRO_0000051199" description="Gem-associated protein 5">
    <location>
        <begin position="1"/>
        <end position="1235"/>
    </location>
</feature>
<feature type="repeat" description="WD 1" evidence="2">
    <location>
        <begin position="55"/>
        <end position="102"/>
    </location>
</feature>
<feature type="repeat" description="WD 2" evidence="3">
    <location>
        <begin position="428"/>
        <end position="469"/>
    </location>
</feature>
<feature type="repeat" description="WD 3" evidence="2">
    <location>
        <begin position="475"/>
        <end position="512"/>
    </location>
</feature>
<feature type="repeat" description="WD 4" evidence="2">
    <location>
        <begin position="565"/>
        <end position="605"/>
    </location>
</feature>
<feature type="repeat" description="WD 5" evidence="2">
    <location>
        <begin position="611"/>
        <end position="650"/>
    </location>
</feature>
<feature type="repeat" description="WD 6" evidence="2">
    <location>
        <begin position="690"/>
        <end position="730"/>
    </location>
</feature>
<feature type="repeat" description="WD 7" evidence="2">
    <location>
        <begin position="739"/>
        <end position="779"/>
    </location>
</feature>
<feature type="repeat" description="WD 8" evidence="2">
    <location>
        <begin position="788"/>
        <end position="828"/>
    </location>
</feature>
<feature type="region of interest" description="Disordered" evidence="4">
    <location>
        <begin position="227"/>
        <end position="263"/>
    </location>
</feature>
<feature type="region of interest" description="Disordered" evidence="4">
    <location>
        <begin position="340"/>
        <end position="368"/>
    </location>
</feature>
<feature type="region of interest" description="Disordered" evidence="4">
    <location>
        <begin position="963"/>
        <end position="983"/>
    </location>
</feature>
<feature type="short sequence motif" description="LXXLL motif">
    <location>
        <begin position="443"/>
        <end position="447"/>
    </location>
</feature>
<feature type="compositionally biased region" description="Basic and acidic residues" evidence="4">
    <location>
        <begin position="234"/>
        <end position="248"/>
    </location>
</feature>
<feature type="compositionally biased region" description="Polar residues" evidence="4">
    <location>
        <begin position="352"/>
        <end position="368"/>
    </location>
</feature>
<feature type="compositionally biased region" description="Basic and acidic residues" evidence="4">
    <location>
        <begin position="963"/>
        <end position="980"/>
    </location>
</feature>
<feature type="modified residue" description="Phosphoserine" evidence="6">
    <location>
        <position position="289"/>
    </location>
</feature>
<feature type="modified residue" description="Phosphoserine" evidence="6">
    <location>
        <position position="290"/>
    </location>
</feature>
<feature type="modified residue" description="Phosphoserine" evidence="6">
    <location>
        <position position="351"/>
    </location>
</feature>
<feature type="modified residue" description="Phosphoserine" evidence="6">
    <location>
        <position position="354"/>
    </location>
</feature>
<feature type="modified residue" description="Phosphothreonine" evidence="6">
    <location>
        <position position="355"/>
    </location>
</feature>
<feature type="modified residue" description="Phosphoserine" evidence="6">
    <location>
        <position position="357"/>
    </location>
</feature>
<feature type="modified residue" description="Phosphothreonine" evidence="6">
    <location>
        <position position="411"/>
    </location>
</feature>
<feature type="sequence conflict" description="In Ref. 4; AAO39440." evidence="12" ref="4">
    <original>H</original>
    <variation>N</variation>
    <location>
        <position position="119"/>
    </location>
</feature>
<feature type="sequence conflict" description="In Ref. 4; AAO39440." evidence="12" ref="4">
    <original>L</original>
    <variation>V</variation>
    <location>
        <position position="126"/>
    </location>
</feature>
<feature type="sequence conflict" description="In Ref. 4; AAO39440." evidence="12" ref="4">
    <original>E</original>
    <variation>D</variation>
    <location>
        <position position="321"/>
    </location>
</feature>
<feature type="sequence conflict" description="In Ref. 4; AAO39440." evidence="12" ref="4">
    <original>V</original>
    <variation>L</variation>
    <location>
        <position position="334"/>
    </location>
</feature>
<feature type="sequence conflict" description="In Ref. 4; AAO39440." evidence="12" ref="4">
    <original>D</original>
    <variation>E</variation>
    <location>
        <position position="364"/>
    </location>
</feature>
<feature type="sequence conflict" description="In Ref. 4; AAO39440." evidence="12" ref="4">
    <original>E</original>
    <variation>K</variation>
    <location>
        <position position="417"/>
    </location>
</feature>
<feature type="sequence conflict" description="In Ref. 4; AAO39440." evidence="12" ref="4">
    <original>S</original>
    <variation>T</variation>
    <location>
        <position position="516"/>
    </location>
</feature>
<feature type="sequence conflict" description="In Ref. 4; AAO39440." evidence="12" ref="4">
    <original>S</original>
    <variation>T</variation>
    <location>
        <position position="731"/>
    </location>
</feature>
<feature type="sequence conflict" description="In Ref. 4; AAO39440." evidence="12" ref="4">
    <original>R</original>
    <variation>K</variation>
    <location>
        <position position="764"/>
    </location>
</feature>
<feature type="sequence conflict" description="In Ref. 4; AAO39440." evidence="12" ref="4">
    <original>P</original>
    <variation>S</variation>
    <location>
        <position position="941"/>
    </location>
</feature>
<feature type="sequence conflict" description="In Ref. 4; AAO39440." evidence="12" ref="4">
    <original>T</original>
    <variation>S</variation>
    <location>
        <position position="947"/>
    </location>
</feature>
<feature type="sequence conflict" description="In Ref. 4; AAO39440." evidence="12" ref="4">
    <original>S</original>
    <variation>T</variation>
    <location>
        <position position="1029"/>
    </location>
</feature>
<organism evidence="14">
    <name type="scientific">Drosophila melanogaster</name>
    <name type="common">Fruit fly</name>
    <dbReference type="NCBI Taxonomy" id="7227"/>
    <lineage>
        <taxon>Eukaryota</taxon>
        <taxon>Metazoa</taxon>
        <taxon>Ecdysozoa</taxon>
        <taxon>Arthropoda</taxon>
        <taxon>Hexapoda</taxon>
        <taxon>Insecta</taxon>
        <taxon>Pterygota</taxon>
        <taxon>Neoptera</taxon>
        <taxon>Endopterygota</taxon>
        <taxon>Diptera</taxon>
        <taxon>Brachycera</taxon>
        <taxon>Muscomorpha</taxon>
        <taxon>Ephydroidea</taxon>
        <taxon>Drosophilidae</taxon>
        <taxon>Drosophila</taxon>
        <taxon>Sophophora</taxon>
    </lineage>
</organism>
<name>RIG_DROME</name>
<keyword id="KW-0963">Cytoplasm</keyword>
<keyword id="KW-0217">Developmental protein</keyword>
<keyword id="KW-0539">Nucleus</keyword>
<keyword id="KW-0597">Phosphoprotein</keyword>
<keyword id="KW-1185">Reference proteome</keyword>
<keyword id="KW-0677">Repeat</keyword>
<keyword id="KW-0804">Transcription</keyword>
<keyword id="KW-0805">Transcription regulation</keyword>
<keyword id="KW-0853">WD repeat</keyword>
<evidence type="ECO:0000250" key="1"/>
<evidence type="ECO:0000255" key="2"/>
<evidence type="ECO:0000255" key="3">
    <source>
        <dbReference type="PROSITE-ProRule" id="PRU00221"/>
    </source>
</evidence>
<evidence type="ECO:0000256" key="4">
    <source>
        <dbReference type="SAM" id="MobiDB-lite"/>
    </source>
</evidence>
<evidence type="ECO:0000269" key="5">
    <source>
    </source>
</evidence>
<evidence type="ECO:0000269" key="6">
    <source>
    </source>
</evidence>
<evidence type="ECO:0000269" key="7">
    <source>
    </source>
</evidence>
<evidence type="ECO:0000269" key="8">
    <source>
    </source>
</evidence>
<evidence type="ECO:0000269" key="9">
    <source>
    </source>
</evidence>
<evidence type="ECO:0000269" key="10">
    <source>
    </source>
</evidence>
<evidence type="ECO:0000303" key="11">
    <source>
    </source>
</evidence>
<evidence type="ECO:0000305" key="12"/>
<evidence type="ECO:0000312" key="13">
    <source>
        <dbReference type="FlyBase" id="FBgn0250850"/>
    </source>
</evidence>
<evidence type="ECO:0000312" key="14">
    <source>
        <dbReference type="Proteomes" id="UP000000803"/>
    </source>
</evidence>
<comment type="function">
    <text evidence="5 8 10">Component of the survival motor neuron (SMN) complex that catalyzes the assembly of small nuclear ribonucleoproteins (snRNPs), the building blocks of the spliceosome, and thereby plays an important role in the splicing of cellular pre-mRNAs (PubMed:30563832). Nuclear receptor cofactor for the ecdysone-regulated processes of molting and puparium formation (PubMed:14645129). Acts downstream from ecdysone biosynthesis and release to control the expression of specific ecdysone-regulated genes such as Eip74EF (E74) (PubMed:14645129). Essential in muscle and neuronal tissues for motor function, including climbing ability and flight (PubMed:24391840).</text>
</comment>
<comment type="subunit">
    <text evidence="5 10">Component of the core survival motor neuron (SMN) complex composed of Smn, Gem2, Gem3, rig/Gem5 and one of 3 almost identical Gem4 paralogs encoded by Glos/Gem4a, Gem4b or Gem4c (PubMed:30563832). Interacts with nuclear receptors EcR, svp (seven up), usp (ultraspiracle), Hr39 and Hr3 (PubMed:14645129).</text>
</comment>
<comment type="interaction">
    <interactant intactId="EBI-422757">
        <id>Q86BY9</id>
    </interactant>
    <interactant intactId="EBI-75048">
        <id>Q05192</id>
        <label>Hr39</label>
    </interactant>
    <organismsDiffer>false</organismsDiffer>
    <experiments>2</experiments>
</comment>
<comment type="subcellular location">
    <subcellularLocation>
        <location evidence="5 8 9">Nucleus</location>
    </subcellularLocation>
    <subcellularLocation>
        <location evidence="5 7 8 9">Cytoplasm</location>
    </subcellularLocation>
    <subcellularLocation>
        <location evidence="7">Cytoplasm</location>
        <location evidence="7">U-body</location>
    </subcellularLocation>
    <subcellularLocation>
        <location evidence="8">Nucleus</location>
        <location evidence="8">Gem</location>
    </subcellularLocation>
    <text evidence="5">Shuttles between the nucleus and cytoplasm at different stages of development.</text>
</comment>
<comment type="tissue specificity">
    <text evidence="5 7">Expressed in the brain and salivary glands of early and late second instar larvae. Expressed in nurse cells and oocytes.</text>
</comment>
<comment type="developmental stage">
    <text evidence="5">During second and third instar larval development, it is localized primarily to the cytoplasm of cells in the brain and imaginal discs (tissues that are fated to form specific parts of the adult fly during metamorphosis). Also localized to the cytoplasm of larval salivary gland cells during the second and early third instar stages. It however, begins to shift into the nucleus of these cells in the mid-third instar maintaining this localization through the end of larval development. At puparium formation, it shuttles out of the nucleus of salivary gland cells to become more abundant in the cytoplasm. A similar dynamic movement occurs in cells of the larval midgut during third instar development.</text>
</comment>
<comment type="domain">
    <text evidence="1">Contains one Leu-Xaa-Xaa-Leu-Leu (LXXLL) motif, which is usually essential for the association with nuclear receptors.</text>
</comment>
<comment type="disruption phenotype">
    <text evidence="8 9">Late larval lethal associated with molting defects at the 3rd instar stage (PubMed:26098872). RNAi-mediated knockdown is late larval to adult lethal; the phenotype is the same if knockdown is restricted to muscle tissue, neuronal tissue or motor neuron cells (PubMed:24391840). Conditional RNAi-mediated knockdown in the central nervous system or muscle tissue of adults results in age-dependent decline of motor functions, including climbing ability and flight (PubMed:24391840).</text>
</comment>
<reference key="1">
    <citation type="journal article" date="2004" name="Development">
        <title>rigor mortis encodes a novel nuclear receptor interacting protein required for ecdysone signaling during Drosophila larval development.</title>
        <authorList>
            <person name="Gates J."/>
            <person name="Lam G."/>
            <person name="Ortiz J.A."/>
            <person name="Losson R."/>
            <person name="Thummel C.S."/>
        </authorList>
    </citation>
    <scope>NUCLEOTIDE SEQUENCE [MRNA]</scope>
    <scope>FUNCTION</scope>
    <scope>SUBCELLULAR LOCATION</scope>
    <scope>TISSUE SPECIFICITY</scope>
    <scope>DEVELOPMENTAL STAGE</scope>
    <scope>INTERACTION WITH ECR; SVP; USP; HR39 AND HR46</scope>
</reference>
<reference evidence="14" key="2">
    <citation type="journal article" date="2000" name="Science">
        <title>The genome sequence of Drosophila melanogaster.</title>
        <authorList>
            <person name="Adams M.D."/>
            <person name="Celniker S.E."/>
            <person name="Holt R.A."/>
            <person name="Evans C.A."/>
            <person name="Gocayne J.D."/>
            <person name="Amanatides P.G."/>
            <person name="Scherer S.E."/>
            <person name="Li P.W."/>
            <person name="Hoskins R.A."/>
            <person name="Galle R.F."/>
            <person name="George R.A."/>
            <person name="Lewis S.E."/>
            <person name="Richards S."/>
            <person name="Ashburner M."/>
            <person name="Henderson S.N."/>
            <person name="Sutton G.G."/>
            <person name="Wortman J.R."/>
            <person name="Yandell M.D."/>
            <person name="Zhang Q."/>
            <person name="Chen L.X."/>
            <person name="Brandon R.C."/>
            <person name="Rogers Y.-H.C."/>
            <person name="Blazej R.G."/>
            <person name="Champe M."/>
            <person name="Pfeiffer B.D."/>
            <person name="Wan K.H."/>
            <person name="Doyle C."/>
            <person name="Baxter E.G."/>
            <person name="Helt G."/>
            <person name="Nelson C.R."/>
            <person name="Miklos G.L.G."/>
            <person name="Abril J.F."/>
            <person name="Agbayani A."/>
            <person name="An H.-J."/>
            <person name="Andrews-Pfannkoch C."/>
            <person name="Baldwin D."/>
            <person name="Ballew R.M."/>
            <person name="Basu A."/>
            <person name="Baxendale J."/>
            <person name="Bayraktaroglu L."/>
            <person name="Beasley E.M."/>
            <person name="Beeson K.Y."/>
            <person name="Benos P.V."/>
            <person name="Berman B.P."/>
            <person name="Bhandari D."/>
            <person name="Bolshakov S."/>
            <person name="Borkova D."/>
            <person name="Botchan M.R."/>
            <person name="Bouck J."/>
            <person name="Brokstein P."/>
            <person name="Brottier P."/>
            <person name="Burtis K.C."/>
            <person name="Busam D.A."/>
            <person name="Butler H."/>
            <person name="Cadieu E."/>
            <person name="Center A."/>
            <person name="Chandra I."/>
            <person name="Cherry J.M."/>
            <person name="Cawley S."/>
            <person name="Dahlke C."/>
            <person name="Davenport L.B."/>
            <person name="Davies P."/>
            <person name="de Pablos B."/>
            <person name="Delcher A."/>
            <person name="Deng Z."/>
            <person name="Mays A.D."/>
            <person name="Dew I."/>
            <person name="Dietz S.M."/>
            <person name="Dodson K."/>
            <person name="Doup L.E."/>
            <person name="Downes M."/>
            <person name="Dugan-Rocha S."/>
            <person name="Dunkov B.C."/>
            <person name="Dunn P."/>
            <person name="Durbin K.J."/>
            <person name="Evangelista C.C."/>
            <person name="Ferraz C."/>
            <person name="Ferriera S."/>
            <person name="Fleischmann W."/>
            <person name="Fosler C."/>
            <person name="Gabrielian A.E."/>
            <person name="Garg N.S."/>
            <person name="Gelbart W.M."/>
            <person name="Glasser K."/>
            <person name="Glodek A."/>
            <person name="Gong F."/>
            <person name="Gorrell J.H."/>
            <person name="Gu Z."/>
            <person name="Guan P."/>
            <person name="Harris M."/>
            <person name="Harris N.L."/>
            <person name="Harvey D.A."/>
            <person name="Heiman T.J."/>
            <person name="Hernandez J.R."/>
            <person name="Houck J."/>
            <person name="Hostin D."/>
            <person name="Houston K.A."/>
            <person name="Howland T.J."/>
            <person name="Wei M.-H."/>
            <person name="Ibegwam C."/>
            <person name="Jalali M."/>
            <person name="Kalush F."/>
            <person name="Karpen G.H."/>
            <person name="Ke Z."/>
            <person name="Kennison J.A."/>
            <person name="Ketchum K.A."/>
            <person name="Kimmel B.E."/>
            <person name="Kodira C.D."/>
            <person name="Kraft C.L."/>
            <person name="Kravitz S."/>
            <person name="Kulp D."/>
            <person name="Lai Z."/>
            <person name="Lasko P."/>
            <person name="Lei Y."/>
            <person name="Levitsky A.A."/>
            <person name="Li J.H."/>
            <person name="Li Z."/>
            <person name="Liang Y."/>
            <person name="Lin X."/>
            <person name="Liu X."/>
            <person name="Mattei B."/>
            <person name="McIntosh T.C."/>
            <person name="McLeod M.P."/>
            <person name="McPherson D."/>
            <person name="Merkulov G."/>
            <person name="Milshina N.V."/>
            <person name="Mobarry C."/>
            <person name="Morris J."/>
            <person name="Moshrefi A."/>
            <person name="Mount S.M."/>
            <person name="Moy M."/>
            <person name="Murphy B."/>
            <person name="Murphy L."/>
            <person name="Muzny D.M."/>
            <person name="Nelson D.L."/>
            <person name="Nelson D.R."/>
            <person name="Nelson K.A."/>
            <person name="Nixon K."/>
            <person name="Nusskern D.R."/>
            <person name="Pacleb J.M."/>
            <person name="Palazzolo M."/>
            <person name="Pittman G.S."/>
            <person name="Pan S."/>
            <person name="Pollard J."/>
            <person name="Puri V."/>
            <person name="Reese M.G."/>
            <person name="Reinert K."/>
            <person name="Remington K."/>
            <person name="Saunders R.D.C."/>
            <person name="Scheeler F."/>
            <person name="Shen H."/>
            <person name="Shue B.C."/>
            <person name="Siden-Kiamos I."/>
            <person name="Simpson M."/>
            <person name="Skupski M.P."/>
            <person name="Smith T.J."/>
            <person name="Spier E."/>
            <person name="Spradling A.C."/>
            <person name="Stapleton M."/>
            <person name="Strong R."/>
            <person name="Sun E."/>
            <person name="Svirskas R."/>
            <person name="Tector C."/>
            <person name="Turner R."/>
            <person name="Venter E."/>
            <person name="Wang A.H."/>
            <person name="Wang X."/>
            <person name="Wang Z.-Y."/>
            <person name="Wassarman D.A."/>
            <person name="Weinstock G.M."/>
            <person name="Weissenbach J."/>
            <person name="Williams S.M."/>
            <person name="Woodage T."/>
            <person name="Worley K.C."/>
            <person name="Wu D."/>
            <person name="Yang S."/>
            <person name="Yao Q.A."/>
            <person name="Ye J."/>
            <person name="Yeh R.-F."/>
            <person name="Zaveri J.S."/>
            <person name="Zhan M."/>
            <person name="Zhang G."/>
            <person name="Zhao Q."/>
            <person name="Zheng L."/>
            <person name="Zheng X.H."/>
            <person name="Zhong F.N."/>
            <person name="Zhong W."/>
            <person name="Zhou X."/>
            <person name="Zhu S.C."/>
            <person name="Zhu X."/>
            <person name="Smith H.O."/>
            <person name="Gibbs R.A."/>
            <person name="Myers E.W."/>
            <person name="Rubin G.M."/>
            <person name="Venter J.C."/>
        </authorList>
    </citation>
    <scope>NUCLEOTIDE SEQUENCE [LARGE SCALE GENOMIC DNA]</scope>
    <source>
        <strain evidence="14">Berkeley</strain>
    </source>
</reference>
<reference evidence="14" key="3">
    <citation type="journal article" date="2002" name="Genome Biol.">
        <title>Annotation of the Drosophila melanogaster euchromatic genome: a systematic review.</title>
        <authorList>
            <person name="Misra S."/>
            <person name="Crosby M.A."/>
            <person name="Mungall C.J."/>
            <person name="Matthews B.B."/>
            <person name="Campbell K.S."/>
            <person name="Hradecky P."/>
            <person name="Huang Y."/>
            <person name="Kaminker J.S."/>
            <person name="Millburn G.H."/>
            <person name="Prochnik S.E."/>
            <person name="Smith C.D."/>
            <person name="Tupy J.L."/>
            <person name="Whitfield E.J."/>
            <person name="Bayraktaroglu L."/>
            <person name="Berman B.P."/>
            <person name="Bettencourt B.R."/>
            <person name="Celniker S.E."/>
            <person name="de Grey A.D.N.J."/>
            <person name="Drysdale R.A."/>
            <person name="Harris N.L."/>
            <person name="Richter J."/>
            <person name="Russo S."/>
            <person name="Schroeder A.J."/>
            <person name="Shu S.Q."/>
            <person name="Stapleton M."/>
            <person name="Yamada C."/>
            <person name="Ashburner M."/>
            <person name="Gelbart W.M."/>
            <person name="Rubin G.M."/>
            <person name="Lewis S.E."/>
        </authorList>
    </citation>
    <scope>GENOME REANNOTATION</scope>
    <source>
        <strain evidence="14">Berkeley</strain>
    </source>
</reference>
<reference key="4">
    <citation type="journal article" date="2002" name="Genome Biol.">
        <title>A Drosophila full-length cDNA resource.</title>
        <authorList>
            <person name="Stapleton M."/>
            <person name="Carlson J.W."/>
            <person name="Brokstein P."/>
            <person name="Yu C."/>
            <person name="Champe M."/>
            <person name="George R.A."/>
            <person name="Guarin H."/>
            <person name="Kronmiller B."/>
            <person name="Pacleb J.M."/>
            <person name="Park S."/>
            <person name="Wan K.H."/>
            <person name="Rubin G.M."/>
            <person name="Celniker S.E."/>
        </authorList>
    </citation>
    <scope>NUCLEOTIDE SEQUENCE [LARGE SCALE MRNA]</scope>
    <source>
        <strain>Berkeley</strain>
        <tissue>Embryo</tissue>
    </source>
</reference>
<reference key="5">
    <citation type="journal article" date="2008" name="J. Proteome Res.">
        <title>Phosphoproteome analysis of Drosophila melanogaster embryos.</title>
        <authorList>
            <person name="Zhai B."/>
            <person name="Villen J."/>
            <person name="Beausoleil S.A."/>
            <person name="Mintseris J."/>
            <person name="Gygi S.P."/>
        </authorList>
    </citation>
    <scope>PHOSPHORYLATION [LARGE SCALE ANALYSIS] AT SER-289; SER-290; SER-351; SER-354; THR-355; SER-357 AND THR-411</scope>
    <scope>IDENTIFICATION BY MASS SPECTROMETRY</scope>
    <source>
        <tissue>Embryo</tissue>
    </source>
</reference>
<reference key="6">
    <citation type="journal article" date="2010" name="Exp. Cell Res.">
        <title>Drosophila SMN complex proteins Gemin2, Gemin3, and Gemin5 are components of U bodies.</title>
        <authorList>
            <person name="Cauchi R.J."/>
            <person name="Sanchez-Pulido L."/>
            <person name="Liu J.L."/>
        </authorList>
    </citation>
    <scope>SUBCELLULAR LOCATION</scope>
    <scope>TISSUE SPECIFICITY</scope>
</reference>
<reference key="7">
    <citation type="journal article" date="2013" name="PLoS ONE">
        <title>The Gemin associates of survival motor neuron are required for motor function in Drosophila.</title>
        <authorList>
            <person name="Borg R."/>
            <person name="Cauchi R.J."/>
        </authorList>
    </citation>
    <scope>FUNCTION</scope>
    <scope>SUBCELLULAR LOCATION</scope>
    <scope>DISRUPTION PHENOTYPE</scope>
</reference>
<reference key="8">
    <citation type="journal article" date="2015" name="PLoS ONE">
        <title>Genetic Interactions between the Members of the SMN-Gemins Complex in Drosophila.</title>
        <authorList>
            <person name="Borg R.M."/>
            <person name="Bordonne R."/>
            <person name="Vassallo N."/>
            <person name="Cauchi R.J."/>
        </authorList>
    </citation>
    <scope>SUBCELLULAR LOCATION</scope>
    <scope>DISRUPTION PHENOTYPE</scope>
</reference>
<reference key="9">
    <citation type="journal article" date="2019" name="G3 (Bethesda)">
        <title>Composition of the Survival Motor Neuron (SMN) Complex in Drosophila melanogaster.</title>
        <authorList>
            <person name="Matera A.G."/>
            <person name="Raimer A.C."/>
            <person name="Schmidt C.A."/>
            <person name="Kelly J.A."/>
            <person name="Droby G.N."/>
            <person name="Baillat D."/>
            <person name="Ten Have S."/>
            <person name="Lamond A.I."/>
            <person name="Wagner E.J."/>
            <person name="Gray K.M."/>
        </authorList>
    </citation>
    <scope>FUNCTION</scope>
    <scope>IDENTIFICATION IN THE SMN COMPLEX</scope>
    <scope>IDENTIFICATION BY MASS SPECTROMETRY</scope>
</reference>
<protein>
    <recommendedName>
        <fullName evidence="12">Gem-associated protein 5</fullName>
        <shortName evidence="12">Gemin5</shortName>
    </recommendedName>
    <alternativeName>
        <fullName evidence="13">Protein rigor mortis</fullName>
    </alternativeName>
</protein>
<accession>Q86BY9</accession>
<accession>Q86P78</accession>
<accession>Q9V957</accession>
<sequence length="1235" mass="137829">MNSQVMYHNVPTPPGNVSLAAAAPDGGLLYAGIRCINYISAPPANGEQPQVVTMSTRINILALDVSPMWGLGNGGPTKPFAIVGDDLSVQVWDCALGEAVIGHKAHQHQHEARDVRVVHHTTNSVLMSYLANGNILSMDASDLVIYCVASNTYCRRSTFISPRNHQLTMVRCSPYNDNLFAVGTAMGNVLVCDLRKMNIVYKFHGHKAPICGLAWREVPAAEDEKTNNLALSAEEWRSRNGGQEEKPKTKPPPLTKSKAAESDDPFDIYNFDHLEYEFGAPIAERRRKSSEDCGGEFVGLEKPAGAAVLDFVEACESVKAELLASRQEDKTQHVEVTLHDCEPTKPTGPLSDASTISNKNDASDSTEGSLEVIQYSSSSDDAVIVDGEAAKPKREVLHHIYHQAEVHASGTPQTKSEPQSNLQVVPAISAETISLTSVNSTHLETLLVSIDGDEVMMIWNTNTGAHAGKNYSKSKTAGKLNNVYWLNNHVIVSLSRHQLFFWSVEFERKMLRYKISKDKSHSCHLQDIVSFACDSSKEMIWLCRNNRQIGMMNPKTGRMADFYGTVAFGVRAMAECPDDMNKIALGCSDRRVAFFDISKLTTSCLPIDSVYVSSNVYCLAWSPNCLELAFGTFDGTVGILDVERMKVKTHLRTPHKKEVYSLVWQDHFIYFIVNRVLGFFDLRKSKIEPTIVNCISRPSYLSIRDSFLFVGTDDGLLQIHERDSGMEKSWSPFIRQSALFARYVTDIAWCPLDSNKFAVSGNDRSVYVMEFQPTERNWKTLHTFTANTEKASITSMRWSHTQKHLLLTFHIEGKVCLWNCNAPEKPPLTITYHCPMWCGMFLPTNENIIMCSGKALSVELIDIKDALEGDEKSICPKVDALLNVKWASKSLTQPYAPVLTAAEKKRQRRDQRKAAAKLEVDVANKDQKKIQESVTAVIDNPTNDKCTQETPVEEMLEALSLDKEQNNRSAKECPKCKEQSPDSFTHSRTCLYLTQKELNKSALEKLAIVLTEDSAKIDKSVLISKLFSSKVMAKELIATELTNLKHSNTKDIAPLCLAMSTFKLREELEQHIANKTLTERHVSLAPSVSFTLWQDCCRAYAKQMEEKGYIMHAATYLFSQGMQSEAIKLFLANEYYKEALVHARICLPATDPLIKTVINNWLEHLEGTGNFAAAALICVLDNEMLRGYSYLRKYRNCTPEIADLMDQIKRIGQLGGVLDGCAPNEPIHNGSTAEH</sequence>
<proteinExistence type="evidence at protein level"/>
<gene>
    <name evidence="13" type="primary">rig</name>
    <name evidence="11 13" type="synonym">Gem5</name>
    <name evidence="13" type="ORF">CG30149</name>
</gene>
<dbReference type="EMBL" id="AY274835">
    <property type="protein sequence ID" value="AAP31582.1"/>
    <property type="molecule type" value="mRNA"/>
</dbReference>
<dbReference type="EMBL" id="AE013599">
    <property type="protein sequence ID" value="AAF57440.3"/>
    <property type="molecule type" value="Genomic_DNA"/>
</dbReference>
<dbReference type="EMBL" id="BT003437">
    <property type="protein sequence ID" value="AAO39440.1"/>
    <property type="molecule type" value="mRNA"/>
</dbReference>
<dbReference type="RefSeq" id="NP_611499.3">
    <property type="nucleotide sequence ID" value="NM_137655.3"/>
</dbReference>
<dbReference type="BioGRID" id="62984">
    <property type="interactions" value="8"/>
</dbReference>
<dbReference type="ComplexPortal" id="CPX-8008">
    <property type="entry name" value="Survival motor neuron complex, Gem4A variant"/>
</dbReference>
<dbReference type="ComplexPortal" id="CPX-8066">
    <property type="entry name" value="Survival motor neuron complex, Gem4B variant"/>
</dbReference>
<dbReference type="ComplexPortal" id="CPX-8067">
    <property type="entry name" value="Survival motor neuron complex, Gem4C variant"/>
</dbReference>
<dbReference type="FunCoup" id="Q86BY9">
    <property type="interactions" value="1181"/>
</dbReference>
<dbReference type="IntAct" id="Q86BY9">
    <property type="interactions" value="7"/>
</dbReference>
<dbReference type="STRING" id="7227.FBpp0085564"/>
<dbReference type="iPTMnet" id="Q86BY9"/>
<dbReference type="PaxDb" id="7227-FBpp0085564"/>
<dbReference type="EnsemblMetazoa" id="FBtr0086252">
    <property type="protein sequence ID" value="FBpp0085564"/>
    <property type="gene ID" value="FBgn0250850"/>
</dbReference>
<dbReference type="GeneID" id="37335"/>
<dbReference type="KEGG" id="dme:Dmel_CG30149"/>
<dbReference type="AGR" id="FB:FBgn0250850"/>
<dbReference type="CTD" id="37335"/>
<dbReference type="FlyBase" id="FBgn0250850">
    <property type="gene designation" value="rig"/>
</dbReference>
<dbReference type="VEuPathDB" id="VectorBase:FBgn0250850"/>
<dbReference type="eggNOG" id="KOG4155">
    <property type="taxonomic scope" value="Eukaryota"/>
</dbReference>
<dbReference type="HOGENOM" id="CLU_279538_0_0_1"/>
<dbReference type="InParanoid" id="Q86BY9"/>
<dbReference type="OMA" id="DVSPMWG"/>
<dbReference type="OrthoDB" id="7326421at2759"/>
<dbReference type="PhylomeDB" id="Q86BY9"/>
<dbReference type="SignaLink" id="Q86BY9"/>
<dbReference type="BioGRID-ORCS" id="37335">
    <property type="hits" value="0 hits in 1 CRISPR screen"/>
</dbReference>
<dbReference type="GenomeRNAi" id="37335"/>
<dbReference type="PRO" id="PR:Q86BY9"/>
<dbReference type="Proteomes" id="UP000000803">
    <property type="component" value="Chromosome 2R"/>
</dbReference>
<dbReference type="Bgee" id="FBgn0250850">
    <property type="expression patterns" value="Expressed in mechanosensory neuron of leg chordotonal organ in insect leg and 36 other cell types or tissues"/>
</dbReference>
<dbReference type="GO" id="GO:0005737">
    <property type="term" value="C:cytoplasm"/>
    <property type="evidence" value="ECO:0000314"/>
    <property type="project" value="UniProtKB"/>
</dbReference>
<dbReference type="GO" id="GO:0071254">
    <property type="term" value="C:cytoplasmic U snRNP body"/>
    <property type="evidence" value="ECO:0000314"/>
    <property type="project" value="FlyBase"/>
</dbReference>
<dbReference type="GO" id="GO:0097504">
    <property type="term" value="C:Gemini of Cajal bodies"/>
    <property type="evidence" value="ECO:0007669"/>
    <property type="project" value="UniProtKB-SubCell"/>
</dbReference>
<dbReference type="GO" id="GO:0005634">
    <property type="term" value="C:nucleus"/>
    <property type="evidence" value="ECO:0000314"/>
    <property type="project" value="UniProtKB"/>
</dbReference>
<dbReference type="GO" id="GO:0032797">
    <property type="term" value="C:SMN complex"/>
    <property type="evidence" value="ECO:0000314"/>
    <property type="project" value="FlyBase"/>
</dbReference>
<dbReference type="GO" id="GO:0003730">
    <property type="term" value="F:mRNA 3'-UTR binding"/>
    <property type="evidence" value="ECO:0000318"/>
    <property type="project" value="GO_Central"/>
</dbReference>
<dbReference type="GO" id="GO:0008344">
    <property type="term" value="P:adult locomotory behavior"/>
    <property type="evidence" value="ECO:0000315"/>
    <property type="project" value="FlyBase"/>
</dbReference>
<dbReference type="GO" id="GO:0007629">
    <property type="term" value="P:flight behavior"/>
    <property type="evidence" value="ECO:0000315"/>
    <property type="project" value="FlyBase"/>
</dbReference>
<dbReference type="GO" id="GO:0007591">
    <property type="term" value="P:molting cycle, chitin-based cuticle"/>
    <property type="evidence" value="ECO:0000315"/>
    <property type="project" value="UniProtKB"/>
</dbReference>
<dbReference type="GO" id="GO:0035075">
    <property type="term" value="P:response to ecdysone"/>
    <property type="evidence" value="ECO:0000315"/>
    <property type="project" value="UniProtKB"/>
</dbReference>
<dbReference type="GO" id="GO:0000387">
    <property type="term" value="P:spliceosomal snRNP assembly"/>
    <property type="evidence" value="ECO:0000250"/>
    <property type="project" value="FlyBase"/>
</dbReference>
<dbReference type="FunFam" id="2.130.10.10:FF:001673">
    <property type="entry name" value="GM19772"/>
    <property type="match status" value="1"/>
</dbReference>
<dbReference type="Gene3D" id="2.130.10.10">
    <property type="entry name" value="YVTN repeat-like/Quinoprotein amine dehydrogenase"/>
    <property type="match status" value="3"/>
</dbReference>
<dbReference type="InterPro" id="IPR056432">
    <property type="entry name" value="Beta-prop_GEMI5_1st"/>
</dbReference>
<dbReference type="InterPro" id="IPR056424">
    <property type="entry name" value="Beta-prop_GEMI5_2nd"/>
</dbReference>
<dbReference type="InterPro" id="IPR052640">
    <property type="entry name" value="Gemin-5"/>
</dbReference>
<dbReference type="InterPro" id="IPR056421">
    <property type="entry name" value="TPR_GEMI5"/>
</dbReference>
<dbReference type="InterPro" id="IPR015943">
    <property type="entry name" value="WD40/YVTN_repeat-like_dom_sf"/>
</dbReference>
<dbReference type="InterPro" id="IPR036322">
    <property type="entry name" value="WD40_repeat_dom_sf"/>
</dbReference>
<dbReference type="InterPro" id="IPR001680">
    <property type="entry name" value="WD40_rpt"/>
</dbReference>
<dbReference type="PANTHER" id="PTHR46362">
    <property type="entry name" value="GEM-ASSOCIATED PROTEIN 5"/>
    <property type="match status" value="1"/>
</dbReference>
<dbReference type="PANTHER" id="PTHR46362:SF1">
    <property type="entry name" value="GEM-ASSOCIATED PROTEIN 5"/>
    <property type="match status" value="1"/>
</dbReference>
<dbReference type="Pfam" id="PF23770">
    <property type="entry name" value="Beta-prop_RIG_1st"/>
    <property type="match status" value="1"/>
</dbReference>
<dbReference type="Pfam" id="PF23775">
    <property type="entry name" value="Beta-prop_RIG_2nd"/>
    <property type="match status" value="1"/>
</dbReference>
<dbReference type="Pfam" id="PF23774">
    <property type="entry name" value="TPR_GEMI5"/>
    <property type="match status" value="1"/>
</dbReference>
<dbReference type="SMART" id="SM00320">
    <property type="entry name" value="WD40"/>
    <property type="match status" value="7"/>
</dbReference>
<dbReference type="SUPFAM" id="SSF50978">
    <property type="entry name" value="WD40 repeat-like"/>
    <property type="match status" value="3"/>
</dbReference>
<dbReference type="PROSITE" id="PS00678">
    <property type="entry name" value="WD_REPEATS_1"/>
    <property type="match status" value="1"/>
</dbReference>